<proteinExistence type="evidence at protein level"/>
<sequence>MASPSSSSSLCSTFASPRAASLGRRLAFSSPRKAFRVRASSRVDKFSKNDIIVSPSILSANFSKLGEQVKAVEVAGCDWIHVDVMDGRFVPNITIGPLVVDALRPVTDLPLDVHLMIVEPEQRVPDFIKAGADIVSVHCEQSSTIHLHRTVNQIKSLGAKAGVVLNPATPLTAIDYVLDVVDLVLIMSVNPGFGGQSFIESQVKKIAELRRLCAEKGVNPWIEVDGGVGPKNAYKVIEAGANAIVAGSAVFGAPDYAEAIKGIKTSQKPVAVPA</sequence>
<dbReference type="EC" id="5.1.3.1" evidence="2"/>
<dbReference type="EMBL" id="AF047444">
    <property type="protein sequence ID" value="AAD09955.1"/>
    <property type="molecule type" value="mRNA"/>
</dbReference>
<dbReference type="EMBL" id="AC073556">
    <property type="protein sequence ID" value="AAL84303.1"/>
    <property type="molecule type" value="Genomic_DNA"/>
</dbReference>
<dbReference type="EMBL" id="DP000009">
    <property type="protein sequence ID" value="ABF94188.1"/>
    <property type="molecule type" value="Genomic_DNA"/>
</dbReference>
<dbReference type="EMBL" id="AP008209">
    <property type="protein sequence ID" value="BAF11010.1"/>
    <property type="molecule type" value="Genomic_DNA"/>
</dbReference>
<dbReference type="EMBL" id="AP014959">
    <property type="protein sequence ID" value="BAS82507.1"/>
    <property type="molecule type" value="Genomic_DNA"/>
</dbReference>
<dbReference type="EMBL" id="CM000140">
    <property type="protein sequence ID" value="EEE58398.1"/>
    <property type="molecule type" value="Genomic_DNA"/>
</dbReference>
<dbReference type="EMBL" id="AK061772">
    <property type="protein sequence ID" value="BAG88103.1"/>
    <property type="molecule type" value="mRNA"/>
</dbReference>
<dbReference type="EMBL" id="AK066306">
    <property type="protein sequence ID" value="BAG89902.1"/>
    <property type="molecule type" value="mRNA"/>
</dbReference>
<dbReference type="EMBL" id="AK099215">
    <property type="protein sequence ID" value="BAG94000.1"/>
    <property type="molecule type" value="mRNA"/>
</dbReference>
<dbReference type="RefSeq" id="XP_015630737.1">
    <property type="nucleotide sequence ID" value="XM_015775251.1"/>
</dbReference>
<dbReference type="SMR" id="Q9ZTP5"/>
<dbReference type="FunCoup" id="Q9ZTP5">
    <property type="interactions" value="1202"/>
</dbReference>
<dbReference type="STRING" id="39947.Q9ZTP5"/>
<dbReference type="PaxDb" id="39947-Q9ZTP5"/>
<dbReference type="EnsemblPlants" id="Os03t0169100-01">
    <property type="protein sequence ID" value="Os03t0169100-01"/>
    <property type="gene ID" value="Os03g0169100"/>
</dbReference>
<dbReference type="Gramene" id="Os03t0169100-01">
    <property type="protein sequence ID" value="Os03t0169100-01"/>
    <property type="gene ID" value="Os03g0169100"/>
</dbReference>
<dbReference type="KEGG" id="dosa:Os03g0169100"/>
<dbReference type="eggNOG" id="KOG3111">
    <property type="taxonomic scope" value="Eukaryota"/>
</dbReference>
<dbReference type="HOGENOM" id="CLU_054856_1_1_1"/>
<dbReference type="InParanoid" id="Q9ZTP5"/>
<dbReference type="OMA" id="CDLILIM"/>
<dbReference type="OrthoDB" id="1927044at2759"/>
<dbReference type="PlantReactome" id="R-OSA-1119519">
    <property type="pathway name" value="Calvin cycle"/>
</dbReference>
<dbReference type="UniPathway" id="UPA00116"/>
<dbReference type="Proteomes" id="UP000000763">
    <property type="component" value="Chromosome 3"/>
</dbReference>
<dbReference type="Proteomes" id="UP000007752">
    <property type="component" value="Chromosome 3"/>
</dbReference>
<dbReference type="Proteomes" id="UP000059680">
    <property type="component" value="Chromosome 3"/>
</dbReference>
<dbReference type="GO" id="GO:0009535">
    <property type="term" value="C:chloroplast thylakoid membrane"/>
    <property type="evidence" value="ECO:0007669"/>
    <property type="project" value="UniProtKB-SubCell"/>
</dbReference>
<dbReference type="GO" id="GO:0005829">
    <property type="term" value="C:cytosol"/>
    <property type="evidence" value="ECO:0000318"/>
    <property type="project" value="GO_Central"/>
</dbReference>
<dbReference type="GO" id="GO:0010319">
    <property type="term" value="C:stromule"/>
    <property type="evidence" value="ECO:0007669"/>
    <property type="project" value="EnsemblPlants"/>
</dbReference>
<dbReference type="GO" id="GO:0004750">
    <property type="term" value="F:D-ribulose-phosphate 3-epimerase activity"/>
    <property type="evidence" value="ECO:0000318"/>
    <property type="project" value="GO_Central"/>
</dbReference>
<dbReference type="GO" id="GO:0046872">
    <property type="term" value="F:metal ion binding"/>
    <property type="evidence" value="ECO:0000318"/>
    <property type="project" value="GO_Central"/>
</dbReference>
<dbReference type="GO" id="GO:0005975">
    <property type="term" value="P:carbohydrate metabolic process"/>
    <property type="evidence" value="ECO:0000318"/>
    <property type="project" value="GO_Central"/>
</dbReference>
<dbReference type="GO" id="GO:0009052">
    <property type="term" value="P:pentose-phosphate shunt, non-oxidative branch"/>
    <property type="evidence" value="ECO:0000318"/>
    <property type="project" value="GO_Central"/>
</dbReference>
<dbReference type="GO" id="GO:0019253">
    <property type="term" value="P:reductive pentose-phosphate cycle"/>
    <property type="evidence" value="ECO:0007669"/>
    <property type="project" value="UniProtKB-UniPathway"/>
</dbReference>
<dbReference type="GO" id="GO:0009409">
    <property type="term" value="P:response to cold"/>
    <property type="evidence" value="ECO:0007669"/>
    <property type="project" value="EnsemblPlants"/>
</dbReference>
<dbReference type="GO" id="GO:0009624">
    <property type="term" value="P:response to nematode"/>
    <property type="evidence" value="ECO:0007669"/>
    <property type="project" value="EnsemblPlants"/>
</dbReference>
<dbReference type="CDD" id="cd00429">
    <property type="entry name" value="RPE"/>
    <property type="match status" value="1"/>
</dbReference>
<dbReference type="FunFam" id="3.20.20.70:FF:000004">
    <property type="entry name" value="Ribulose-phosphate 3-epimerase"/>
    <property type="match status" value="1"/>
</dbReference>
<dbReference type="Gene3D" id="3.20.20.70">
    <property type="entry name" value="Aldolase class I"/>
    <property type="match status" value="1"/>
</dbReference>
<dbReference type="HAMAP" id="MF_02227">
    <property type="entry name" value="RPE"/>
    <property type="match status" value="1"/>
</dbReference>
<dbReference type="InterPro" id="IPR013785">
    <property type="entry name" value="Aldolase_TIM"/>
</dbReference>
<dbReference type="InterPro" id="IPR026019">
    <property type="entry name" value="Ribul_P_3_epim"/>
</dbReference>
<dbReference type="InterPro" id="IPR000056">
    <property type="entry name" value="Ribul_P_3_epim-like"/>
</dbReference>
<dbReference type="InterPro" id="IPR011060">
    <property type="entry name" value="RibuloseP-bd_barrel"/>
</dbReference>
<dbReference type="NCBIfam" id="NF004076">
    <property type="entry name" value="PRK05581.1-4"/>
    <property type="match status" value="1"/>
</dbReference>
<dbReference type="NCBIfam" id="TIGR01163">
    <property type="entry name" value="rpe"/>
    <property type="match status" value="1"/>
</dbReference>
<dbReference type="PANTHER" id="PTHR11749">
    <property type="entry name" value="RIBULOSE-5-PHOSPHATE-3-EPIMERASE"/>
    <property type="match status" value="1"/>
</dbReference>
<dbReference type="Pfam" id="PF00834">
    <property type="entry name" value="Ribul_P_3_epim"/>
    <property type="match status" value="1"/>
</dbReference>
<dbReference type="PIRSF" id="PIRSF001461">
    <property type="entry name" value="RPE"/>
    <property type="match status" value="1"/>
</dbReference>
<dbReference type="SUPFAM" id="SSF51366">
    <property type="entry name" value="Ribulose-phoshate binding barrel"/>
    <property type="match status" value="1"/>
</dbReference>
<dbReference type="PROSITE" id="PS01085">
    <property type="entry name" value="RIBUL_P_3_EPIMER_1"/>
    <property type="match status" value="1"/>
</dbReference>
<dbReference type="PROSITE" id="PS01086">
    <property type="entry name" value="RIBUL_P_3_EPIMER_2"/>
    <property type="match status" value="1"/>
</dbReference>
<organism>
    <name type="scientific">Oryza sativa subsp. japonica</name>
    <name type="common">Rice</name>
    <dbReference type="NCBI Taxonomy" id="39947"/>
    <lineage>
        <taxon>Eukaryota</taxon>
        <taxon>Viridiplantae</taxon>
        <taxon>Streptophyta</taxon>
        <taxon>Embryophyta</taxon>
        <taxon>Tracheophyta</taxon>
        <taxon>Spermatophyta</taxon>
        <taxon>Magnoliopsida</taxon>
        <taxon>Liliopsida</taxon>
        <taxon>Poales</taxon>
        <taxon>Poaceae</taxon>
        <taxon>BOP clade</taxon>
        <taxon>Oryzoideae</taxon>
        <taxon>Oryzeae</taxon>
        <taxon>Oryzinae</taxon>
        <taxon>Oryza</taxon>
        <taxon>Oryza sativa</taxon>
    </lineage>
</organism>
<protein>
    <recommendedName>
        <fullName>Ribulose-phosphate 3-epimerase, chloroplastic</fullName>
        <ecNumber evidence="2">5.1.3.1</ecNumber>
    </recommendedName>
    <alternativeName>
        <fullName>Pentose-5-phosphate 3-epimerase</fullName>
        <shortName>PPE</shortName>
    </alternativeName>
    <alternativeName>
        <fullName>R5P3E</fullName>
        <shortName>RPE</shortName>
    </alternativeName>
</protein>
<name>RPE_ORYSJ</name>
<keyword id="KW-0113">Calvin cycle</keyword>
<keyword id="KW-0119">Carbohydrate metabolism</keyword>
<keyword id="KW-0150">Chloroplast</keyword>
<keyword id="KW-0170">Cobalt</keyword>
<keyword id="KW-0903">Direct protein sequencing</keyword>
<keyword id="KW-0408">Iron</keyword>
<keyword id="KW-0413">Isomerase</keyword>
<keyword id="KW-0464">Manganese</keyword>
<keyword id="KW-0472">Membrane</keyword>
<keyword id="KW-0479">Metal-binding</keyword>
<keyword id="KW-0570">Pentose shunt</keyword>
<keyword id="KW-0934">Plastid</keyword>
<keyword id="KW-1185">Reference proteome</keyword>
<keyword id="KW-0793">Thylakoid</keyword>
<keyword id="KW-0809">Transit peptide</keyword>
<keyword id="KW-0862">Zinc</keyword>
<comment type="function">
    <text evidence="2">Catalyzes the reversible epimerization of D-ribulose 5-phosphate to D-xylulose 5-phosphate.</text>
</comment>
<comment type="catalytic activity">
    <reaction evidence="2">
        <text>D-ribulose 5-phosphate = D-xylulose 5-phosphate</text>
        <dbReference type="Rhea" id="RHEA:13677"/>
        <dbReference type="ChEBI" id="CHEBI:57737"/>
        <dbReference type="ChEBI" id="CHEBI:58121"/>
        <dbReference type="EC" id="5.1.3.1"/>
    </reaction>
</comment>
<comment type="cofactor">
    <cofactor evidence="3">
        <name>Co(2+)</name>
        <dbReference type="ChEBI" id="CHEBI:48828"/>
    </cofactor>
    <cofactor evidence="3">
        <name>Fe(2+)</name>
        <dbReference type="ChEBI" id="CHEBI:29033"/>
    </cofactor>
    <cofactor evidence="3">
        <name>Mn(2+)</name>
        <dbReference type="ChEBI" id="CHEBI:29035"/>
    </cofactor>
    <cofactor evidence="3">
        <name>Zn(2+)</name>
        <dbReference type="ChEBI" id="CHEBI:29105"/>
    </cofactor>
    <text evidence="3">Binds 1 divalent metal cation per subunit. Active with Co(2+), Fe(2+), Mn(2+) and Zn(2+).</text>
</comment>
<comment type="pathway">
    <text evidence="2">Carbohydrate biosynthesis; Calvin cycle.</text>
</comment>
<comment type="subunit">
    <text evidence="2">Homooctamer.</text>
</comment>
<comment type="subcellular location">
    <subcellularLocation>
        <location evidence="2">Plastid</location>
        <location evidence="2">Chloroplast thylakoid membrane</location>
    </subcellularLocation>
</comment>
<comment type="similarity">
    <text evidence="5">Belongs to the ribulose-phosphate 3-epimerase family.</text>
</comment>
<gene>
    <name type="primary">RPE</name>
    <name type="synonym">RPE2</name>
    <name type="ordered locus">Os03g0169100</name>
    <name type="ordered locus">LOC_Os03g07300</name>
    <name evidence="6" type="ORF">OsJ_09567</name>
    <name type="ORF">OSJNBa0091P11.10</name>
</gene>
<feature type="transit peptide" description="Chloroplast" evidence="4">
    <location>
        <begin position="1"/>
        <end position="39"/>
    </location>
</feature>
<feature type="chain" id="PRO_0000025415" description="Ribulose-phosphate 3-epimerase, chloroplastic">
    <location>
        <begin position="40"/>
        <end position="274"/>
    </location>
</feature>
<feature type="active site" description="Proton acceptor" evidence="1">
    <location>
        <position position="83"/>
    </location>
</feature>
<feature type="active site" description="Proton donor" evidence="1">
    <location>
        <position position="225"/>
    </location>
</feature>
<feature type="binding site" evidence="1">
    <location>
        <position position="56"/>
    </location>
    <ligand>
        <name>substrate</name>
    </ligand>
</feature>
<feature type="binding site" evidence="1">
    <location>
        <position position="81"/>
    </location>
    <ligand>
        <name>a divalent metal cation</name>
        <dbReference type="ChEBI" id="CHEBI:60240"/>
    </ligand>
</feature>
<feature type="binding site" evidence="1">
    <location>
        <position position="83"/>
    </location>
    <ligand>
        <name>a divalent metal cation</name>
        <dbReference type="ChEBI" id="CHEBI:60240"/>
    </ligand>
</feature>
<feature type="binding site" evidence="1">
    <location>
        <position position="114"/>
    </location>
    <ligand>
        <name>a divalent metal cation</name>
        <dbReference type="ChEBI" id="CHEBI:60240"/>
    </ligand>
</feature>
<feature type="binding site" evidence="1">
    <location>
        <position position="114"/>
    </location>
    <ligand>
        <name>substrate</name>
    </ligand>
</feature>
<feature type="binding site" evidence="1">
    <location>
        <begin position="192"/>
        <end position="195"/>
    </location>
    <ligand>
        <name>substrate</name>
    </ligand>
</feature>
<feature type="binding site" evidence="1">
    <location>
        <begin position="225"/>
        <end position="227"/>
    </location>
    <ligand>
        <name>substrate</name>
    </ligand>
</feature>
<feature type="binding site" evidence="1">
    <location>
        <position position="225"/>
    </location>
    <ligand>
        <name>a divalent metal cation</name>
        <dbReference type="ChEBI" id="CHEBI:60240"/>
    </ligand>
</feature>
<feature type="binding site" evidence="1">
    <location>
        <begin position="247"/>
        <end position="248"/>
    </location>
    <ligand>
        <name>substrate</name>
    </ligand>
</feature>
<feature type="sequence conflict" description="In Ref. 1; AAD09955." evidence="5" ref="1">
    <original>RLC</original>
    <variation>KYV</variation>
    <location>
        <begin position="211"/>
        <end position="213"/>
    </location>
</feature>
<feature type="sequence conflict" description="In Ref. 1; AAD09955." evidence="5" ref="1">
    <original>QK</original>
    <variation>KR</variation>
    <location>
        <begin position="267"/>
        <end position="268"/>
    </location>
</feature>
<reference key="1">
    <citation type="journal article" date="1998" name="EMBO J.">
        <title>RPE, a plant gene involved in early developmental steps of nematode feeding cells.</title>
        <authorList>
            <person name="Favery B."/>
            <person name="Lecomte P."/>
            <person name="Gil N."/>
            <person name="Bechtold N."/>
            <person name="Bouchez D."/>
            <person name="Dalmasso A."/>
            <person name="Abad P."/>
        </authorList>
    </citation>
    <scope>NUCLEOTIDE SEQUENCE [MRNA]</scope>
</reference>
<reference key="2">
    <citation type="journal article" date="2005" name="Genome Res.">
        <title>Sequence, annotation, and analysis of synteny between rice chromosome 3 and diverged grass species.</title>
        <authorList>
            <consortium name="The rice chromosome 3 sequencing consortium"/>
            <person name="Buell C.R."/>
            <person name="Yuan Q."/>
            <person name="Ouyang S."/>
            <person name="Liu J."/>
            <person name="Zhu W."/>
            <person name="Wang A."/>
            <person name="Maiti R."/>
            <person name="Haas B."/>
            <person name="Wortman J."/>
            <person name="Pertea M."/>
            <person name="Jones K.M."/>
            <person name="Kim M."/>
            <person name="Overton L."/>
            <person name="Tsitrin T."/>
            <person name="Fadrosh D."/>
            <person name="Bera J."/>
            <person name="Weaver B."/>
            <person name="Jin S."/>
            <person name="Johri S."/>
            <person name="Reardon M."/>
            <person name="Webb K."/>
            <person name="Hill J."/>
            <person name="Moffat K."/>
            <person name="Tallon L."/>
            <person name="Van Aken S."/>
            <person name="Lewis M."/>
            <person name="Utterback T."/>
            <person name="Feldblyum T."/>
            <person name="Zismann V."/>
            <person name="Iobst S."/>
            <person name="Hsiao J."/>
            <person name="de Vazeille A.R."/>
            <person name="Salzberg S.L."/>
            <person name="White O."/>
            <person name="Fraser C.M."/>
            <person name="Yu Y."/>
            <person name="Kim H."/>
            <person name="Rambo T."/>
            <person name="Currie J."/>
            <person name="Collura K."/>
            <person name="Kernodle-Thompson S."/>
            <person name="Wei F."/>
            <person name="Kudrna K."/>
            <person name="Ammiraju J.S.S."/>
            <person name="Luo M."/>
            <person name="Goicoechea J.L."/>
            <person name="Wing R.A."/>
            <person name="Henry D."/>
            <person name="Oates R."/>
            <person name="Palmer M."/>
            <person name="Pries G."/>
            <person name="Saski C."/>
            <person name="Simmons J."/>
            <person name="Soderlund C."/>
            <person name="Nelson W."/>
            <person name="de la Bastide M."/>
            <person name="Spiegel L."/>
            <person name="Nascimento L."/>
            <person name="Huang E."/>
            <person name="Preston R."/>
            <person name="Zutavern T."/>
            <person name="Palmer L."/>
            <person name="O'Shaughnessy A."/>
            <person name="Dike S."/>
            <person name="McCombie W.R."/>
            <person name="Minx P."/>
            <person name="Cordum H."/>
            <person name="Wilson R."/>
            <person name="Jin W."/>
            <person name="Lee H.R."/>
            <person name="Jiang J."/>
            <person name="Jackson S."/>
        </authorList>
    </citation>
    <scope>NUCLEOTIDE SEQUENCE [LARGE SCALE GENOMIC DNA]</scope>
    <source>
        <strain>cv. Nipponbare</strain>
    </source>
</reference>
<reference key="3">
    <citation type="journal article" date="2005" name="Nature">
        <title>The map-based sequence of the rice genome.</title>
        <authorList>
            <consortium name="International rice genome sequencing project (IRGSP)"/>
        </authorList>
    </citation>
    <scope>NUCLEOTIDE SEQUENCE [LARGE SCALE GENOMIC DNA]</scope>
    <source>
        <strain>cv. Nipponbare</strain>
    </source>
</reference>
<reference key="4">
    <citation type="journal article" date="2008" name="Nucleic Acids Res.">
        <title>The rice annotation project database (RAP-DB): 2008 update.</title>
        <authorList>
            <consortium name="The rice annotation project (RAP)"/>
        </authorList>
    </citation>
    <scope>GENOME REANNOTATION</scope>
    <source>
        <strain>cv. Nipponbare</strain>
    </source>
</reference>
<reference key="5">
    <citation type="journal article" date="2013" name="Rice">
        <title>Improvement of the Oryza sativa Nipponbare reference genome using next generation sequence and optical map data.</title>
        <authorList>
            <person name="Kawahara Y."/>
            <person name="de la Bastide M."/>
            <person name="Hamilton J.P."/>
            <person name="Kanamori H."/>
            <person name="McCombie W.R."/>
            <person name="Ouyang S."/>
            <person name="Schwartz D.C."/>
            <person name="Tanaka T."/>
            <person name="Wu J."/>
            <person name="Zhou S."/>
            <person name="Childs K.L."/>
            <person name="Davidson R.M."/>
            <person name="Lin H."/>
            <person name="Quesada-Ocampo L."/>
            <person name="Vaillancourt B."/>
            <person name="Sakai H."/>
            <person name="Lee S.S."/>
            <person name="Kim J."/>
            <person name="Numa H."/>
            <person name="Itoh T."/>
            <person name="Buell C.R."/>
            <person name="Matsumoto T."/>
        </authorList>
    </citation>
    <scope>GENOME REANNOTATION</scope>
    <source>
        <strain>cv. Nipponbare</strain>
    </source>
</reference>
<reference key="6">
    <citation type="journal article" date="2005" name="PLoS Biol.">
        <title>The genomes of Oryza sativa: a history of duplications.</title>
        <authorList>
            <person name="Yu J."/>
            <person name="Wang J."/>
            <person name="Lin W."/>
            <person name="Li S."/>
            <person name="Li H."/>
            <person name="Zhou J."/>
            <person name="Ni P."/>
            <person name="Dong W."/>
            <person name="Hu S."/>
            <person name="Zeng C."/>
            <person name="Zhang J."/>
            <person name="Zhang Y."/>
            <person name="Li R."/>
            <person name="Xu Z."/>
            <person name="Li S."/>
            <person name="Li X."/>
            <person name="Zheng H."/>
            <person name="Cong L."/>
            <person name="Lin L."/>
            <person name="Yin J."/>
            <person name="Geng J."/>
            <person name="Li G."/>
            <person name="Shi J."/>
            <person name="Liu J."/>
            <person name="Lv H."/>
            <person name="Li J."/>
            <person name="Wang J."/>
            <person name="Deng Y."/>
            <person name="Ran L."/>
            <person name="Shi X."/>
            <person name="Wang X."/>
            <person name="Wu Q."/>
            <person name="Li C."/>
            <person name="Ren X."/>
            <person name="Wang J."/>
            <person name="Wang X."/>
            <person name="Li D."/>
            <person name="Liu D."/>
            <person name="Zhang X."/>
            <person name="Ji Z."/>
            <person name="Zhao W."/>
            <person name="Sun Y."/>
            <person name="Zhang Z."/>
            <person name="Bao J."/>
            <person name="Han Y."/>
            <person name="Dong L."/>
            <person name="Ji J."/>
            <person name="Chen P."/>
            <person name="Wu S."/>
            <person name="Liu J."/>
            <person name="Xiao Y."/>
            <person name="Bu D."/>
            <person name="Tan J."/>
            <person name="Yang L."/>
            <person name="Ye C."/>
            <person name="Zhang J."/>
            <person name="Xu J."/>
            <person name="Zhou Y."/>
            <person name="Yu Y."/>
            <person name="Zhang B."/>
            <person name="Zhuang S."/>
            <person name="Wei H."/>
            <person name="Liu B."/>
            <person name="Lei M."/>
            <person name="Yu H."/>
            <person name="Li Y."/>
            <person name="Xu H."/>
            <person name="Wei S."/>
            <person name="He X."/>
            <person name="Fang L."/>
            <person name="Zhang Z."/>
            <person name="Zhang Y."/>
            <person name="Huang X."/>
            <person name="Su Z."/>
            <person name="Tong W."/>
            <person name="Li J."/>
            <person name="Tong Z."/>
            <person name="Li S."/>
            <person name="Ye J."/>
            <person name="Wang L."/>
            <person name="Fang L."/>
            <person name="Lei T."/>
            <person name="Chen C.-S."/>
            <person name="Chen H.-C."/>
            <person name="Xu Z."/>
            <person name="Li H."/>
            <person name="Huang H."/>
            <person name="Zhang F."/>
            <person name="Xu H."/>
            <person name="Li N."/>
            <person name="Zhao C."/>
            <person name="Li S."/>
            <person name="Dong L."/>
            <person name="Huang Y."/>
            <person name="Li L."/>
            <person name="Xi Y."/>
            <person name="Qi Q."/>
            <person name="Li W."/>
            <person name="Zhang B."/>
            <person name="Hu W."/>
            <person name="Zhang Y."/>
            <person name="Tian X."/>
            <person name="Jiao Y."/>
            <person name="Liang X."/>
            <person name="Jin J."/>
            <person name="Gao L."/>
            <person name="Zheng W."/>
            <person name="Hao B."/>
            <person name="Liu S.-M."/>
            <person name="Wang W."/>
            <person name="Yuan L."/>
            <person name="Cao M."/>
            <person name="McDermott J."/>
            <person name="Samudrala R."/>
            <person name="Wang J."/>
            <person name="Wong G.K.-S."/>
            <person name="Yang H."/>
        </authorList>
    </citation>
    <scope>NUCLEOTIDE SEQUENCE [LARGE SCALE GENOMIC DNA]</scope>
    <source>
        <strain>cv. Nipponbare</strain>
    </source>
</reference>
<reference key="7">
    <citation type="journal article" date="2003" name="Science">
        <title>Collection, mapping, and annotation of over 28,000 cDNA clones from japonica rice.</title>
        <authorList>
            <consortium name="The rice full-length cDNA consortium"/>
        </authorList>
    </citation>
    <scope>NUCLEOTIDE SEQUENCE [LARGE SCALE MRNA]</scope>
    <source>
        <strain>cv. Nipponbare</strain>
    </source>
</reference>
<reference key="8">
    <citation type="journal article" date="2006" name="Proteomics">
        <title>Proteomic analysis of rice leaf, stem and root tissues during growth course.</title>
        <authorList>
            <person name="Nozu Y."/>
            <person name="Tsugita A."/>
            <person name="Kamijo K."/>
        </authorList>
    </citation>
    <scope>PROTEIN SEQUENCE [LARGE SCALE ANALYSIS] OF 40-46</scope>
    <scope>IDENTIFICATION BY MASS SPECTROMETRY</scope>
    <source>
        <strain>cv. Nipponbare</strain>
    </source>
</reference>
<accession>Q9ZTP5</accession>
<accession>Q10R77</accession>
<accession>Q8S7V5</accession>
<evidence type="ECO:0000250" key="1">
    <source>
        <dbReference type="UniProtKB" id="P32719"/>
    </source>
</evidence>
<evidence type="ECO:0000250" key="2">
    <source>
        <dbReference type="UniProtKB" id="Q43157"/>
    </source>
</evidence>
<evidence type="ECO:0000250" key="3">
    <source>
        <dbReference type="UniProtKB" id="Q96AT9"/>
    </source>
</evidence>
<evidence type="ECO:0000269" key="4">
    <source>
    </source>
</evidence>
<evidence type="ECO:0000305" key="5"/>
<evidence type="ECO:0000312" key="6">
    <source>
        <dbReference type="EMBL" id="EEE58398.1"/>
    </source>
</evidence>